<accession>A8Y9A6</accession>
<geneLocation type="chloroplast"/>
<name>PSAJ_LOLPR</name>
<reference key="1">
    <citation type="journal article" date="2008" name="PLoS ONE">
        <title>An optimized chloroplast DNA extraction protocol for grasses (Poaceae) proves suitable for whole plastid genome sequencing and SNP detection.</title>
        <authorList>
            <person name="Diekmann K."/>
            <person name="Hodkinson T.R."/>
            <person name="Fricke E."/>
            <person name="Barth S."/>
        </authorList>
    </citation>
    <scope>NUCLEOTIDE SEQUENCE [LARGE SCALE GENOMIC DNA]</scope>
    <source>
        <strain>cv. Cashel</strain>
    </source>
</reference>
<gene>
    <name evidence="1" type="primary">psaJ</name>
    <name type="ordered locus">LopeCp061</name>
</gene>
<keyword id="KW-0150">Chloroplast</keyword>
<keyword id="KW-0472">Membrane</keyword>
<keyword id="KW-0602">Photosynthesis</keyword>
<keyword id="KW-0603">Photosystem I</keyword>
<keyword id="KW-0934">Plastid</keyword>
<keyword id="KW-0793">Thylakoid</keyword>
<keyword id="KW-0812">Transmembrane</keyword>
<keyword id="KW-1133">Transmembrane helix</keyword>
<evidence type="ECO:0000255" key="1">
    <source>
        <dbReference type="HAMAP-Rule" id="MF_00522"/>
    </source>
</evidence>
<proteinExistence type="inferred from homology"/>
<protein>
    <recommendedName>
        <fullName evidence="1">Photosystem I reaction center subunit IX</fullName>
    </recommendedName>
    <alternativeName>
        <fullName evidence="1">PSI-J</fullName>
    </alternativeName>
</protein>
<organism>
    <name type="scientific">Lolium perenne</name>
    <name type="common">Perennial ryegrass</name>
    <dbReference type="NCBI Taxonomy" id="4522"/>
    <lineage>
        <taxon>Eukaryota</taxon>
        <taxon>Viridiplantae</taxon>
        <taxon>Streptophyta</taxon>
        <taxon>Embryophyta</taxon>
        <taxon>Tracheophyta</taxon>
        <taxon>Spermatophyta</taxon>
        <taxon>Magnoliopsida</taxon>
        <taxon>Liliopsida</taxon>
        <taxon>Poales</taxon>
        <taxon>Poaceae</taxon>
        <taxon>BOP clade</taxon>
        <taxon>Pooideae</taxon>
        <taxon>Poodae</taxon>
        <taxon>Poeae</taxon>
        <taxon>Poeae Chloroplast Group 2 (Poeae type)</taxon>
        <taxon>Loliodinae</taxon>
        <taxon>Loliinae</taxon>
        <taxon>Lolium</taxon>
    </lineage>
</organism>
<feature type="chain" id="PRO_0000354157" description="Photosystem I reaction center subunit IX">
    <location>
        <begin position="1"/>
        <end position="42"/>
    </location>
</feature>
<feature type="transmembrane region" description="Helical" evidence="1">
    <location>
        <begin position="7"/>
        <end position="27"/>
    </location>
</feature>
<dbReference type="EMBL" id="AM777385">
    <property type="protein sequence ID" value="CAO85995.1"/>
    <property type="molecule type" value="Genomic_DNA"/>
</dbReference>
<dbReference type="RefSeq" id="YP_001531302.1">
    <property type="nucleotide sequence ID" value="NC_009950.1"/>
</dbReference>
<dbReference type="SMR" id="A8Y9A6"/>
<dbReference type="GeneID" id="5696606"/>
<dbReference type="KEGG" id="lper:5696606"/>
<dbReference type="GO" id="GO:0009535">
    <property type="term" value="C:chloroplast thylakoid membrane"/>
    <property type="evidence" value="ECO:0007669"/>
    <property type="project" value="UniProtKB-SubCell"/>
</dbReference>
<dbReference type="GO" id="GO:0009522">
    <property type="term" value="C:photosystem I"/>
    <property type="evidence" value="ECO:0007669"/>
    <property type="project" value="UniProtKB-KW"/>
</dbReference>
<dbReference type="GO" id="GO:0015979">
    <property type="term" value="P:photosynthesis"/>
    <property type="evidence" value="ECO:0007669"/>
    <property type="project" value="UniProtKB-UniRule"/>
</dbReference>
<dbReference type="FunFam" id="1.20.5.510:FF:000001">
    <property type="entry name" value="Photosystem I reaction center subunit IX"/>
    <property type="match status" value="1"/>
</dbReference>
<dbReference type="Gene3D" id="1.20.5.510">
    <property type="entry name" value="Single helix bin"/>
    <property type="match status" value="1"/>
</dbReference>
<dbReference type="HAMAP" id="MF_00522">
    <property type="entry name" value="PSI_PsaJ"/>
    <property type="match status" value="1"/>
</dbReference>
<dbReference type="InterPro" id="IPR002615">
    <property type="entry name" value="PSI_PsaJ"/>
</dbReference>
<dbReference type="InterPro" id="IPR036062">
    <property type="entry name" value="PSI_PsaJ_sf"/>
</dbReference>
<dbReference type="PANTHER" id="PTHR36082">
    <property type="match status" value="1"/>
</dbReference>
<dbReference type="PANTHER" id="PTHR36082:SF2">
    <property type="entry name" value="PHOTOSYSTEM I REACTION CENTER SUBUNIT IX"/>
    <property type="match status" value="1"/>
</dbReference>
<dbReference type="Pfam" id="PF01701">
    <property type="entry name" value="PSI_PsaJ"/>
    <property type="match status" value="1"/>
</dbReference>
<dbReference type="SUPFAM" id="SSF81544">
    <property type="entry name" value="Subunit IX of photosystem I reaction centre, PsaJ"/>
    <property type="match status" value="1"/>
</dbReference>
<comment type="function">
    <text evidence="1">May help in the organization of the PsaE and PsaF subunits.</text>
</comment>
<comment type="subcellular location">
    <subcellularLocation>
        <location evidence="1">Plastid</location>
        <location evidence="1">Chloroplast thylakoid membrane</location>
        <topology evidence="1">Single-pass membrane protein</topology>
    </subcellularLocation>
</comment>
<comment type="similarity">
    <text evidence="1">Belongs to the PsaJ family.</text>
</comment>
<sequence length="42" mass="4745">MRDIKTYLSVAPVLSTLWFGALAGLLIEINRLFPDALSFPFF</sequence>